<organism>
    <name type="scientific">Homo sapiens</name>
    <name type="common">Human</name>
    <dbReference type="NCBI Taxonomy" id="9606"/>
    <lineage>
        <taxon>Eukaryota</taxon>
        <taxon>Metazoa</taxon>
        <taxon>Chordata</taxon>
        <taxon>Craniata</taxon>
        <taxon>Vertebrata</taxon>
        <taxon>Euteleostomi</taxon>
        <taxon>Mammalia</taxon>
        <taxon>Eutheria</taxon>
        <taxon>Euarchontoglires</taxon>
        <taxon>Primates</taxon>
        <taxon>Haplorrhini</taxon>
        <taxon>Catarrhini</taxon>
        <taxon>Hominidae</taxon>
        <taxon>Homo</taxon>
    </lineage>
</organism>
<reference key="1">
    <citation type="journal article" date="2007" name="BMC Genomics">
        <title>The full-ORF clone resource of the German cDNA consortium.</title>
        <authorList>
            <person name="Bechtel S."/>
            <person name="Rosenfelder H."/>
            <person name="Duda A."/>
            <person name="Schmidt C.P."/>
            <person name="Ernst U."/>
            <person name="Wellenreuther R."/>
            <person name="Mehrle A."/>
            <person name="Schuster C."/>
            <person name="Bahr A."/>
            <person name="Bloecker H."/>
            <person name="Heubner D."/>
            <person name="Hoerlein A."/>
            <person name="Michel G."/>
            <person name="Wedler H."/>
            <person name="Koehrer K."/>
            <person name="Ottenwaelder B."/>
            <person name="Poustka A."/>
            <person name="Wiemann S."/>
            <person name="Schupp I."/>
        </authorList>
    </citation>
    <scope>NUCLEOTIDE SEQUENCE [LARGE SCALE MRNA]</scope>
    <source>
        <tissue>Testis</tissue>
    </source>
</reference>
<sequence length="564" mass="59412">MRRPSTASLTRTPSRASPTRMPSRASLKMTPFRASLTKMESTALLRTLPRASLMRTPTRASLMRTPPRASPTRKPPRASPRTPSRASPTRRLPRASPMGSPHRASPMRTPPRASPTGTPSTASPTGTPSSASPTGTPPRASPTGTPPRAWATRSPSTASLTRTPSRASLTRWPPRASPTRTPPRESPRMSHRASPTRTPPRASPTRRPPRASPTRTPPRESLRTSHRASPTRMPPRASPTRRPPRASPTGSPPRASPMTPPRASPRTPPRASPTTTPSRASLTRTPSWASPTTTPSRASLMKMESTVSITRTPPRASPTGTPSRASPTGTPSRASLTGSPSRASLTGTPSRASLIGTPSRASLIGTPSRASLTGTPPRASLTGTSSTASLTRTPSRASLTRTQSSSSLTRTPSMASLTRTPPRASLTRTPPRASLTRTPPRASLTRTPPRASLTRTPSMVSLKRSPSRASLTRTPSRASLTMTPSRASLTRTPSTASLTGTPPTASLTRTPPTASLTRSPPTASLTRTPSTASLTRMPSTASLTRKSNVNQQCPASTPSSEVIS</sequence>
<name>YM012_HUMAN</name>
<proteinExistence type="evidence at protein level"/>
<accession>Q9UF83</accession>
<accession>Q9NTQ6</accession>
<accession>Q9UFS5</accession>
<dbReference type="EMBL" id="AL117481">
    <property type="protein sequence ID" value="CAB55954.1"/>
    <property type="molecule type" value="mRNA"/>
</dbReference>
<dbReference type="EMBL" id="AL133561">
    <property type="protein sequence ID" value="CAB63715.1"/>
    <property type="status" value="ALT_INIT"/>
    <property type="molecule type" value="mRNA"/>
</dbReference>
<dbReference type="EMBL" id="AL122069">
    <property type="protein sequence ID" value="CAB59245.2"/>
    <property type="status" value="ALT_INIT"/>
    <property type="molecule type" value="mRNA"/>
</dbReference>
<dbReference type="PIR" id="T43481">
    <property type="entry name" value="T43481"/>
</dbReference>
<dbReference type="FunCoup" id="Q9UF83">
    <property type="interactions" value="430"/>
</dbReference>
<dbReference type="IntAct" id="Q9UF83">
    <property type="interactions" value="3"/>
</dbReference>
<dbReference type="GlyGen" id="Q9UF83">
    <property type="glycosylation" value="7 sites, 1 O-linked glycan (1 site)"/>
</dbReference>
<dbReference type="iPTMnet" id="Q9UF83"/>
<dbReference type="PhosphoSitePlus" id="Q9UF83"/>
<dbReference type="BioMuta" id="-"/>
<dbReference type="jPOST" id="Q9UF83"/>
<dbReference type="MassIVE" id="Q9UF83"/>
<dbReference type="neXtProt" id="NX_Q9UF83"/>
<dbReference type="InParanoid" id="Q9UF83"/>
<dbReference type="PAN-GO" id="Q9UF83">
    <property type="GO annotations" value="0 GO annotations based on evolutionary models"/>
</dbReference>
<dbReference type="PathwayCommons" id="Q9UF83"/>
<dbReference type="Pharos" id="Q9UF83">
    <property type="development level" value="Tdark"/>
</dbReference>
<dbReference type="Proteomes" id="UP000005640">
    <property type="component" value="Unplaced"/>
</dbReference>
<dbReference type="RNAct" id="Q9UF83">
    <property type="molecule type" value="protein"/>
</dbReference>
<dbReference type="GO" id="GO:0005615">
    <property type="term" value="C:extracellular space"/>
    <property type="evidence" value="ECO:0007005"/>
    <property type="project" value="UniProtKB"/>
</dbReference>
<dbReference type="PANTHER" id="PTHR35683:SF7">
    <property type="entry name" value="APPLE DOMAIN-CONTAINING PROTEIN"/>
    <property type="match status" value="1"/>
</dbReference>
<dbReference type="PANTHER" id="PTHR35683">
    <property type="entry name" value="YALI0C04136P"/>
    <property type="match status" value="1"/>
</dbReference>
<dbReference type="PRINTS" id="PR01217">
    <property type="entry name" value="PRICHEXTENSN"/>
</dbReference>
<comment type="sequence caution" evidence="2">
    <conflict type="erroneous initiation">
        <sequence resource="EMBL-CDS" id="CAB59245"/>
    </conflict>
</comment>
<comment type="sequence caution" evidence="2">
    <conflict type="erroneous initiation">
        <sequence resource="EMBL-CDS" id="CAB63715"/>
    </conflict>
</comment>
<protein>
    <recommendedName>
        <fullName>Uncharacterized protein DKFZp434B061</fullName>
    </recommendedName>
</protein>
<keyword id="KW-1267">Proteomics identification</keyword>
<keyword id="KW-1185">Reference proteome</keyword>
<feature type="chain" id="PRO_0000332254" description="Uncharacterized protein DKFZp434B061">
    <location>
        <begin position="1"/>
        <end position="564"/>
    </location>
</feature>
<feature type="region of interest" description="Disordered" evidence="1">
    <location>
        <begin position="1"/>
        <end position="564"/>
    </location>
</feature>
<feature type="compositionally biased region" description="Polar residues" evidence="1">
    <location>
        <begin position="1"/>
        <end position="17"/>
    </location>
</feature>
<feature type="compositionally biased region" description="Low complexity" evidence="1">
    <location>
        <begin position="79"/>
        <end position="97"/>
    </location>
</feature>
<feature type="compositionally biased region" description="Low complexity" evidence="1">
    <location>
        <begin position="114"/>
        <end position="134"/>
    </location>
</feature>
<feature type="compositionally biased region" description="Polar residues" evidence="1">
    <location>
        <begin position="153"/>
        <end position="168"/>
    </location>
</feature>
<feature type="compositionally biased region" description="Low complexity" evidence="1">
    <location>
        <begin position="170"/>
        <end position="179"/>
    </location>
</feature>
<feature type="compositionally biased region" description="Pro residues" evidence="1">
    <location>
        <begin position="250"/>
        <end position="271"/>
    </location>
</feature>
<feature type="compositionally biased region" description="Low complexity" evidence="1">
    <location>
        <begin position="272"/>
        <end position="299"/>
    </location>
</feature>
<feature type="compositionally biased region" description="Polar residues" evidence="1">
    <location>
        <begin position="318"/>
        <end position="351"/>
    </location>
</feature>
<feature type="compositionally biased region" description="Low complexity" evidence="1">
    <location>
        <begin position="378"/>
        <end position="416"/>
    </location>
</feature>
<feature type="compositionally biased region" description="Polar residues" evidence="1">
    <location>
        <begin position="467"/>
        <end position="564"/>
    </location>
</feature>
<evidence type="ECO:0000256" key="1">
    <source>
        <dbReference type="SAM" id="MobiDB-lite"/>
    </source>
</evidence>
<evidence type="ECO:0000305" key="2"/>